<organism>
    <name type="scientific">Salmonella typhi</name>
    <dbReference type="NCBI Taxonomy" id="90370"/>
    <lineage>
        <taxon>Bacteria</taxon>
        <taxon>Pseudomonadati</taxon>
        <taxon>Pseudomonadota</taxon>
        <taxon>Gammaproteobacteria</taxon>
        <taxon>Enterobacterales</taxon>
        <taxon>Enterobacteriaceae</taxon>
        <taxon>Salmonella</taxon>
    </lineage>
</organism>
<gene>
    <name type="primary">pgk</name>
    <name type="ordered locus">STY3227</name>
    <name type="ordered locus">t2988</name>
</gene>
<accession>P65703</accession>
<accession>Q8XG18</accession>
<feature type="initiator methionine" description="Removed" evidence="1">
    <location>
        <position position="1"/>
    </location>
</feature>
<feature type="chain" id="PRO_0000145996" description="Phosphoglycerate kinase">
    <location>
        <begin position="2"/>
        <end position="387"/>
    </location>
</feature>
<feature type="binding site" evidence="1">
    <location>
        <begin position="21"/>
        <end position="23"/>
    </location>
    <ligand>
        <name>substrate</name>
    </ligand>
</feature>
<feature type="binding site" evidence="1">
    <location>
        <position position="36"/>
    </location>
    <ligand>
        <name>substrate</name>
    </ligand>
</feature>
<feature type="binding site" evidence="1">
    <location>
        <begin position="59"/>
        <end position="62"/>
    </location>
    <ligand>
        <name>substrate</name>
    </ligand>
</feature>
<feature type="binding site" evidence="1">
    <location>
        <position position="113"/>
    </location>
    <ligand>
        <name>substrate</name>
    </ligand>
</feature>
<feature type="binding site" evidence="1">
    <location>
        <position position="146"/>
    </location>
    <ligand>
        <name>substrate</name>
    </ligand>
</feature>
<feature type="binding site" evidence="1">
    <location>
        <position position="197"/>
    </location>
    <ligand>
        <name>ATP</name>
        <dbReference type="ChEBI" id="CHEBI:30616"/>
    </ligand>
</feature>
<feature type="binding site" evidence="1">
    <location>
        <position position="314"/>
    </location>
    <ligand>
        <name>ATP</name>
        <dbReference type="ChEBI" id="CHEBI:30616"/>
    </ligand>
</feature>
<feature type="binding site" evidence="1">
    <location>
        <begin position="340"/>
        <end position="343"/>
    </location>
    <ligand>
        <name>ATP</name>
        <dbReference type="ChEBI" id="CHEBI:30616"/>
    </ligand>
</feature>
<name>PGK_SALTI</name>
<reference key="1">
    <citation type="journal article" date="2001" name="Nature">
        <title>Complete genome sequence of a multiple drug resistant Salmonella enterica serovar Typhi CT18.</title>
        <authorList>
            <person name="Parkhill J."/>
            <person name="Dougan G."/>
            <person name="James K.D."/>
            <person name="Thomson N.R."/>
            <person name="Pickard D."/>
            <person name="Wain J."/>
            <person name="Churcher C.M."/>
            <person name="Mungall K.L."/>
            <person name="Bentley S.D."/>
            <person name="Holden M.T.G."/>
            <person name="Sebaihia M."/>
            <person name="Baker S."/>
            <person name="Basham D."/>
            <person name="Brooks K."/>
            <person name="Chillingworth T."/>
            <person name="Connerton P."/>
            <person name="Cronin A."/>
            <person name="Davis P."/>
            <person name="Davies R.M."/>
            <person name="Dowd L."/>
            <person name="White N."/>
            <person name="Farrar J."/>
            <person name="Feltwell T."/>
            <person name="Hamlin N."/>
            <person name="Haque A."/>
            <person name="Hien T.T."/>
            <person name="Holroyd S."/>
            <person name="Jagels K."/>
            <person name="Krogh A."/>
            <person name="Larsen T.S."/>
            <person name="Leather S."/>
            <person name="Moule S."/>
            <person name="O'Gaora P."/>
            <person name="Parry C."/>
            <person name="Quail M.A."/>
            <person name="Rutherford K.M."/>
            <person name="Simmonds M."/>
            <person name="Skelton J."/>
            <person name="Stevens K."/>
            <person name="Whitehead S."/>
            <person name="Barrell B.G."/>
        </authorList>
    </citation>
    <scope>NUCLEOTIDE SEQUENCE [LARGE SCALE GENOMIC DNA]</scope>
    <source>
        <strain>CT18</strain>
    </source>
</reference>
<reference key="2">
    <citation type="journal article" date="2003" name="J. Bacteriol.">
        <title>Comparative genomics of Salmonella enterica serovar Typhi strains Ty2 and CT18.</title>
        <authorList>
            <person name="Deng W."/>
            <person name="Liou S.-R."/>
            <person name="Plunkett G. III"/>
            <person name="Mayhew G.F."/>
            <person name="Rose D.J."/>
            <person name="Burland V."/>
            <person name="Kodoyianni V."/>
            <person name="Schwartz D.C."/>
            <person name="Blattner F.R."/>
        </authorList>
    </citation>
    <scope>NUCLEOTIDE SEQUENCE [LARGE SCALE GENOMIC DNA]</scope>
    <source>
        <strain>ATCC 700931 / Ty2</strain>
    </source>
</reference>
<protein>
    <recommendedName>
        <fullName>Phosphoglycerate kinase</fullName>
        <ecNumber>2.7.2.3</ecNumber>
    </recommendedName>
</protein>
<proteinExistence type="inferred from homology"/>
<evidence type="ECO:0000250" key="1"/>
<evidence type="ECO:0000305" key="2"/>
<sequence length="387" mass="41132">MSVIKMTDLDLAGKRVFIRADLNVPVKEGKVTSDARIRASLPTIELALKQGAKVMVTSHLGRPTEGEYNEEFSLLPVVNYLKDKLSNPVRLVKDYLDGVDVAEGELVVLENVRFNKGEKKDDEALSKKYAALCDVFVMDAFGTAHRAQASTHGIGKFADVACAGPLLAAELDALGKALKEPARPMVAIVGGSKVSTKLTVLDSLSKIADQLIVGGGIANTFVAAQGHSVGKSLYEADLVDEAKRLLTTCDIPVPTDVRVATEFSETAPATLKSVNDVKEDEQILDIGDASAQQLAEILKNAKTILWNGPVGVFEFPNFRKGTEIVANAIADSEAFSIAGGGDTLAAIDLFGIADKISYISTGGGAFLEFVEGKVLPAVAMLEERAKK</sequence>
<keyword id="KW-0067">ATP-binding</keyword>
<keyword id="KW-0963">Cytoplasm</keyword>
<keyword id="KW-0324">Glycolysis</keyword>
<keyword id="KW-0418">Kinase</keyword>
<keyword id="KW-0547">Nucleotide-binding</keyword>
<keyword id="KW-0808">Transferase</keyword>
<comment type="catalytic activity">
    <reaction>
        <text>(2R)-3-phosphoglycerate + ATP = (2R)-3-phospho-glyceroyl phosphate + ADP</text>
        <dbReference type="Rhea" id="RHEA:14801"/>
        <dbReference type="ChEBI" id="CHEBI:30616"/>
        <dbReference type="ChEBI" id="CHEBI:57604"/>
        <dbReference type="ChEBI" id="CHEBI:58272"/>
        <dbReference type="ChEBI" id="CHEBI:456216"/>
        <dbReference type="EC" id="2.7.2.3"/>
    </reaction>
</comment>
<comment type="pathway">
    <text>Carbohydrate degradation; glycolysis; pyruvate from D-glyceraldehyde 3-phosphate: step 2/5.</text>
</comment>
<comment type="subunit">
    <text evidence="1">Monomer.</text>
</comment>
<comment type="subcellular location">
    <subcellularLocation>
        <location evidence="2">Cytoplasm</location>
    </subcellularLocation>
</comment>
<comment type="similarity">
    <text evidence="2">Belongs to the phosphoglycerate kinase family.</text>
</comment>
<dbReference type="EC" id="2.7.2.3"/>
<dbReference type="EMBL" id="AL513382">
    <property type="protein sequence ID" value="CAD02900.1"/>
    <property type="molecule type" value="Genomic_DNA"/>
</dbReference>
<dbReference type="EMBL" id="AE014613">
    <property type="protein sequence ID" value="AAO70540.1"/>
    <property type="molecule type" value="Genomic_DNA"/>
</dbReference>
<dbReference type="RefSeq" id="NP_457468.1">
    <property type="nucleotide sequence ID" value="NC_003198.1"/>
</dbReference>
<dbReference type="RefSeq" id="WP_000111274.1">
    <property type="nucleotide sequence ID" value="NZ_WSUR01000063.1"/>
</dbReference>
<dbReference type="SMR" id="P65703"/>
<dbReference type="STRING" id="220341.gene:17587102"/>
<dbReference type="KEGG" id="stt:t2988"/>
<dbReference type="KEGG" id="sty:STY3227"/>
<dbReference type="PATRIC" id="fig|220341.7.peg.3290"/>
<dbReference type="eggNOG" id="COG0126">
    <property type="taxonomic scope" value="Bacteria"/>
</dbReference>
<dbReference type="HOGENOM" id="CLU_025427_0_2_6"/>
<dbReference type="OMA" id="DMIFDIG"/>
<dbReference type="OrthoDB" id="9808460at2"/>
<dbReference type="UniPathway" id="UPA00109">
    <property type="reaction ID" value="UER00185"/>
</dbReference>
<dbReference type="Proteomes" id="UP000000541">
    <property type="component" value="Chromosome"/>
</dbReference>
<dbReference type="Proteomes" id="UP000002670">
    <property type="component" value="Chromosome"/>
</dbReference>
<dbReference type="GO" id="GO:0005829">
    <property type="term" value="C:cytosol"/>
    <property type="evidence" value="ECO:0007669"/>
    <property type="project" value="TreeGrafter"/>
</dbReference>
<dbReference type="GO" id="GO:0043531">
    <property type="term" value="F:ADP binding"/>
    <property type="evidence" value="ECO:0007669"/>
    <property type="project" value="TreeGrafter"/>
</dbReference>
<dbReference type="GO" id="GO:0005524">
    <property type="term" value="F:ATP binding"/>
    <property type="evidence" value="ECO:0007669"/>
    <property type="project" value="UniProtKB-KW"/>
</dbReference>
<dbReference type="GO" id="GO:0004618">
    <property type="term" value="F:phosphoglycerate kinase activity"/>
    <property type="evidence" value="ECO:0007669"/>
    <property type="project" value="UniProtKB-UniRule"/>
</dbReference>
<dbReference type="GO" id="GO:0006094">
    <property type="term" value="P:gluconeogenesis"/>
    <property type="evidence" value="ECO:0007669"/>
    <property type="project" value="TreeGrafter"/>
</dbReference>
<dbReference type="GO" id="GO:0006096">
    <property type="term" value="P:glycolytic process"/>
    <property type="evidence" value="ECO:0007669"/>
    <property type="project" value="UniProtKB-UniRule"/>
</dbReference>
<dbReference type="FunFam" id="3.40.50.1260:FF:000001">
    <property type="entry name" value="Phosphoglycerate kinase"/>
    <property type="match status" value="1"/>
</dbReference>
<dbReference type="FunFam" id="3.40.50.1260:FF:000002">
    <property type="entry name" value="Phosphoglycerate kinase"/>
    <property type="match status" value="1"/>
</dbReference>
<dbReference type="Gene3D" id="3.40.50.1260">
    <property type="entry name" value="Phosphoglycerate kinase, N-terminal domain"/>
    <property type="match status" value="2"/>
</dbReference>
<dbReference type="HAMAP" id="MF_00145">
    <property type="entry name" value="Phosphoglyc_kinase"/>
    <property type="match status" value="1"/>
</dbReference>
<dbReference type="InterPro" id="IPR001576">
    <property type="entry name" value="Phosphoglycerate_kinase"/>
</dbReference>
<dbReference type="InterPro" id="IPR015911">
    <property type="entry name" value="Phosphoglycerate_kinase_CS"/>
</dbReference>
<dbReference type="InterPro" id="IPR015824">
    <property type="entry name" value="Phosphoglycerate_kinase_N"/>
</dbReference>
<dbReference type="InterPro" id="IPR036043">
    <property type="entry name" value="Phosphoglycerate_kinase_sf"/>
</dbReference>
<dbReference type="PANTHER" id="PTHR11406">
    <property type="entry name" value="PHOSPHOGLYCERATE KINASE"/>
    <property type="match status" value="1"/>
</dbReference>
<dbReference type="PANTHER" id="PTHR11406:SF23">
    <property type="entry name" value="PHOSPHOGLYCERATE KINASE 1, CHLOROPLASTIC-RELATED"/>
    <property type="match status" value="1"/>
</dbReference>
<dbReference type="Pfam" id="PF00162">
    <property type="entry name" value="PGK"/>
    <property type="match status" value="1"/>
</dbReference>
<dbReference type="PIRSF" id="PIRSF000724">
    <property type="entry name" value="Pgk"/>
    <property type="match status" value="1"/>
</dbReference>
<dbReference type="PRINTS" id="PR00477">
    <property type="entry name" value="PHGLYCKINASE"/>
</dbReference>
<dbReference type="SUPFAM" id="SSF53748">
    <property type="entry name" value="Phosphoglycerate kinase"/>
    <property type="match status" value="1"/>
</dbReference>
<dbReference type="PROSITE" id="PS00111">
    <property type="entry name" value="PGLYCERATE_KINASE"/>
    <property type="match status" value="1"/>
</dbReference>